<name>Y1374_METJA</name>
<sequence length="266" mass="29920">MRVEIIFLGCGGGRWATITQKKATGGFRIHTNELRMHVDPGPGAIVRLNELKISPWRTNALFISHCHPDHYTDGEIIVEAITQGMTKKRGVFLGSLSVVEGFGEYEYVVSKYHQSKLEEVRVLYPGDSAELYDTTIKATHTKHGDPFGIGFRLSTIYGDIGYTSDTEFIPQLIEDFDGVRILIANIVRKKNERIKGHLCSNDAIDLINSMNKKPELLIMNHMGVKMTNPQIEAEYISQNTGIEVIPARLGLKVELLNGKYKYQLIK</sequence>
<reference key="1">
    <citation type="journal article" date="1996" name="Science">
        <title>Complete genome sequence of the methanogenic archaeon, Methanococcus jannaschii.</title>
        <authorList>
            <person name="Bult C.J."/>
            <person name="White O."/>
            <person name="Olsen G.J."/>
            <person name="Zhou L."/>
            <person name="Fleischmann R.D."/>
            <person name="Sutton G.G."/>
            <person name="Blake J.A."/>
            <person name="FitzGerald L.M."/>
            <person name="Clayton R.A."/>
            <person name="Gocayne J.D."/>
            <person name="Kerlavage A.R."/>
            <person name="Dougherty B.A."/>
            <person name="Tomb J.-F."/>
            <person name="Adams M.D."/>
            <person name="Reich C.I."/>
            <person name="Overbeek R."/>
            <person name="Kirkness E.F."/>
            <person name="Weinstock K.G."/>
            <person name="Merrick J.M."/>
            <person name="Glodek A."/>
            <person name="Scott J.L."/>
            <person name="Geoghagen N.S.M."/>
            <person name="Weidman J.F."/>
            <person name="Fuhrmann J.L."/>
            <person name="Nguyen D."/>
            <person name="Utterback T.R."/>
            <person name="Kelley J.M."/>
            <person name="Peterson J.D."/>
            <person name="Sadow P.W."/>
            <person name="Hanna M.C."/>
            <person name="Cotton M.D."/>
            <person name="Roberts K.M."/>
            <person name="Hurst M.A."/>
            <person name="Kaine B.P."/>
            <person name="Borodovsky M."/>
            <person name="Klenk H.-P."/>
            <person name="Fraser C.M."/>
            <person name="Smith H.O."/>
            <person name="Woese C.R."/>
            <person name="Venter J.C."/>
        </authorList>
    </citation>
    <scope>NUCLEOTIDE SEQUENCE [LARGE SCALE GENOMIC DNA]</scope>
    <source>
        <strain>ATCC 43067 / DSM 2661 / JAL-1 / JCM 10045 / NBRC 100440</strain>
    </source>
</reference>
<accession>Q58769</accession>
<feature type="chain" id="PRO_0000107303" description="Uncharacterized protein MJ1374">
    <location>
        <begin position="1"/>
        <end position="266"/>
    </location>
</feature>
<protein>
    <recommendedName>
        <fullName>Uncharacterized protein MJ1374</fullName>
    </recommendedName>
</protein>
<keyword id="KW-1185">Reference proteome</keyword>
<gene>
    <name type="ordered locus">MJ1374</name>
</gene>
<proteinExistence type="predicted"/>
<organism>
    <name type="scientific">Methanocaldococcus jannaschii (strain ATCC 43067 / DSM 2661 / JAL-1 / JCM 10045 / NBRC 100440)</name>
    <name type="common">Methanococcus jannaschii</name>
    <dbReference type="NCBI Taxonomy" id="243232"/>
    <lineage>
        <taxon>Archaea</taxon>
        <taxon>Methanobacteriati</taxon>
        <taxon>Methanobacteriota</taxon>
        <taxon>Methanomada group</taxon>
        <taxon>Methanococci</taxon>
        <taxon>Methanococcales</taxon>
        <taxon>Methanocaldococcaceae</taxon>
        <taxon>Methanocaldococcus</taxon>
    </lineage>
</organism>
<dbReference type="EMBL" id="L77117">
    <property type="protein sequence ID" value="AAB99381.1"/>
    <property type="molecule type" value="Genomic_DNA"/>
</dbReference>
<dbReference type="PIR" id="E64471">
    <property type="entry name" value="E64471"/>
</dbReference>
<dbReference type="RefSeq" id="WP_010870891.1">
    <property type="nucleotide sequence ID" value="NC_000909.1"/>
</dbReference>
<dbReference type="SMR" id="Q58769"/>
<dbReference type="STRING" id="243232.MJ_1374"/>
<dbReference type="PaxDb" id="243232-MJ_1374"/>
<dbReference type="EnsemblBacteria" id="AAB99381">
    <property type="protein sequence ID" value="AAB99381"/>
    <property type="gene ID" value="MJ_1374"/>
</dbReference>
<dbReference type="GeneID" id="1452277"/>
<dbReference type="KEGG" id="mja:MJ_1374"/>
<dbReference type="eggNOG" id="arCOG00499">
    <property type="taxonomic scope" value="Archaea"/>
</dbReference>
<dbReference type="HOGENOM" id="CLU_074581_0_0_2"/>
<dbReference type="InParanoid" id="Q58769"/>
<dbReference type="OrthoDB" id="73420at2157"/>
<dbReference type="PhylomeDB" id="Q58769"/>
<dbReference type="Proteomes" id="UP000000805">
    <property type="component" value="Chromosome"/>
</dbReference>
<dbReference type="CDD" id="cd07741">
    <property type="entry name" value="metallo-hydrolase-like_MBL-fold"/>
    <property type="match status" value="1"/>
</dbReference>
<dbReference type="Gene3D" id="3.60.15.10">
    <property type="entry name" value="Ribonuclease Z/Hydroxyacylglutathione hydrolase-like"/>
    <property type="match status" value="1"/>
</dbReference>
<dbReference type="InterPro" id="IPR001279">
    <property type="entry name" value="Metallo-B-lactamas"/>
</dbReference>
<dbReference type="InterPro" id="IPR036866">
    <property type="entry name" value="RibonucZ/Hydroxyglut_hydro"/>
</dbReference>
<dbReference type="PANTHER" id="PTHR42663:SF6">
    <property type="entry name" value="HYDROLASE C777.06C-RELATED"/>
    <property type="match status" value="1"/>
</dbReference>
<dbReference type="PANTHER" id="PTHR42663">
    <property type="entry name" value="HYDROLASE C777.06C-RELATED-RELATED"/>
    <property type="match status" value="1"/>
</dbReference>
<dbReference type="Pfam" id="PF12706">
    <property type="entry name" value="Lactamase_B_2"/>
    <property type="match status" value="1"/>
</dbReference>
<dbReference type="SUPFAM" id="SSF56281">
    <property type="entry name" value="Metallo-hydrolase/oxidoreductase"/>
    <property type="match status" value="1"/>
</dbReference>